<accession>B8CR54</accession>
<evidence type="ECO:0000255" key="1">
    <source>
        <dbReference type="HAMAP-Rule" id="MF_01013"/>
    </source>
</evidence>
<keyword id="KW-0028">Amino-acid biosynthesis</keyword>
<keyword id="KW-0963">Cytoplasm</keyword>
<keyword id="KW-0368">Histidine biosynthesis</keyword>
<keyword id="KW-0456">Lyase</keyword>
<proteinExistence type="inferred from homology"/>
<feature type="chain" id="PRO_1000135046" description="Imidazole glycerol phosphate synthase subunit HisF">
    <location>
        <begin position="1"/>
        <end position="257"/>
    </location>
</feature>
<feature type="active site" evidence="1">
    <location>
        <position position="11"/>
    </location>
</feature>
<feature type="active site" evidence="1">
    <location>
        <position position="130"/>
    </location>
</feature>
<name>HIS6_SHEPW</name>
<gene>
    <name evidence="1" type="primary">hisF</name>
    <name type="ordered locus">swp_3008</name>
</gene>
<dbReference type="EC" id="4.3.2.10" evidence="1"/>
<dbReference type="EMBL" id="CP000472">
    <property type="protein sequence ID" value="ACJ29726.1"/>
    <property type="molecule type" value="Genomic_DNA"/>
</dbReference>
<dbReference type="RefSeq" id="WP_020913080.1">
    <property type="nucleotide sequence ID" value="NC_011566.1"/>
</dbReference>
<dbReference type="SMR" id="B8CR54"/>
<dbReference type="STRING" id="225849.swp_3008"/>
<dbReference type="KEGG" id="swp:swp_3008"/>
<dbReference type="eggNOG" id="COG0107">
    <property type="taxonomic scope" value="Bacteria"/>
</dbReference>
<dbReference type="HOGENOM" id="CLU_048577_4_0_6"/>
<dbReference type="OrthoDB" id="9781903at2"/>
<dbReference type="UniPathway" id="UPA00031">
    <property type="reaction ID" value="UER00010"/>
</dbReference>
<dbReference type="Proteomes" id="UP000000753">
    <property type="component" value="Chromosome"/>
</dbReference>
<dbReference type="GO" id="GO:0005737">
    <property type="term" value="C:cytoplasm"/>
    <property type="evidence" value="ECO:0007669"/>
    <property type="project" value="UniProtKB-SubCell"/>
</dbReference>
<dbReference type="GO" id="GO:0000107">
    <property type="term" value="F:imidazoleglycerol-phosphate synthase activity"/>
    <property type="evidence" value="ECO:0007669"/>
    <property type="project" value="UniProtKB-UniRule"/>
</dbReference>
<dbReference type="GO" id="GO:0016829">
    <property type="term" value="F:lyase activity"/>
    <property type="evidence" value="ECO:0007669"/>
    <property type="project" value="UniProtKB-KW"/>
</dbReference>
<dbReference type="GO" id="GO:0000105">
    <property type="term" value="P:L-histidine biosynthetic process"/>
    <property type="evidence" value="ECO:0007669"/>
    <property type="project" value="UniProtKB-UniRule"/>
</dbReference>
<dbReference type="CDD" id="cd04731">
    <property type="entry name" value="HisF"/>
    <property type="match status" value="1"/>
</dbReference>
<dbReference type="FunFam" id="3.20.20.70:FF:000006">
    <property type="entry name" value="Imidazole glycerol phosphate synthase subunit HisF"/>
    <property type="match status" value="1"/>
</dbReference>
<dbReference type="Gene3D" id="3.20.20.70">
    <property type="entry name" value="Aldolase class I"/>
    <property type="match status" value="1"/>
</dbReference>
<dbReference type="HAMAP" id="MF_01013">
    <property type="entry name" value="HisF"/>
    <property type="match status" value="1"/>
</dbReference>
<dbReference type="InterPro" id="IPR013785">
    <property type="entry name" value="Aldolase_TIM"/>
</dbReference>
<dbReference type="InterPro" id="IPR006062">
    <property type="entry name" value="His_biosynth"/>
</dbReference>
<dbReference type="InterPro" id="IPR004651">
    <property type="entry name" value="HisF"/>
</dbReference>
<dbReference type="InterPro" id="IPR050064">
    <property type="entry name" value="IGPS_HisA/HisF"/>
</dbReference>
<dbReference type="InterPro" id="IPR011060">
    <property type="entry name" value="RibuloseP-bd_barrel"/>
</dbReference>
<dbReference type="NCBIfam" id="TIGR00735">
    <property type="entry name" value="hisF"/>
    <property type="match status" value="1"/>
</dbReference>
<dbReference type="PANTHER" id="PTHR21235:SF2">
    <property type="entry name" value="IMIDAZOLE GLYCEROL PHOSPHATE SYNTHASE HISHF"/>
    <property type="match status" value="1"/>
</dbReference>
<dbReference type="PANTHER" id="PTHR21235">
    <property type="entry name" value="IMIDAZOLE GLYCEROL PHOSPHATE SYNTHASE SUBUNIT HISF/H IGP SYNTHASE SUBUNIT HISF/H"/>
    <property type="match status" value="1"/>
</dbReference>
<dbReference type="Pfam" id="PF00977">
    <property type="entry name" value="His_biosynth"/>
    <property type="match status" value="1"/>
</dbReference>
<dbReference type="SUPFAM" id="SSF51366">
    <property type="entry name" value="Ribulose-phoshate binding barrel"/>
    <property type="match status" value="1"/>
</dbReference>
<comment type="function">
    <text evidence="1">IGPS catalyzes the conversion of PRFAR and glutamine to IGP, AICAR and glutamate. The HisF subunit catalyzes the cyclization activity that produces IGP and AICAR from PRFAR using the ammonia provided by the HisH subunit.</text>
</comment>
<comment type="catalytic activity">
    <reaction evidence="1">
        <text>5-[(5-phospho-1-deoxy-D-ribulos-1-ylimino)methylamino]-1-(5-phospho-beta-D-ribosyl)imidazole-4-carboxamide + L-glutamine = D-erythro-1-(imidazol-4-yl)glycerol 3-phosphate + 5-amino-1-(5-phospho-beta-D-ribosyl)imidazole-4-carboxamide + L-glutamate + H(+)</text>
        <dbReference type="Rhea" id="RHEA:24793"/>
        <dbReference type="ChEBI" id="CHEBI:15378"/>
        <dbReference type="ChEBI" id="CHEBI:29985"/>
        <dbReference type="ChEBI" id="CHEBI:58278"/>
        <dbReference type="ChEBI" id="CHEBI:58359"/>
        <dbReference type="ChEBI" id="CHEBI:58475"/>
        <dbReference type="ChEBI" id="CHEBI:58525"/>
        <dbReference type="EC" id="4.3.2.10"/>
    </reaction>
</comment>
<comment type="pathway">
    <text evidence="1">Amino-acid biosynthesis; L-histidine biosynthesis; L-histidine from 5-phospho-alpha-D-ribose 1-diphosphate: step 5/9.</text>
</comment>
<comment type="subunit">
    <text evidence="1">Heterodimer of HisH and HisF.</text>
</comment>
<comment type="subcellular location">
    <subcellularLocation>
        <location evidence="1">Cytoplasm</location>
    </subcellularLocation>
</comment>
<comment type="similarity">
    <text evidence="1">Belongs to the HisA/HisF family.</text>
</comment>
<sequence>MLAKRIVPCLDVKEGKVVKGVQFRNHEIVGDIVPLAARYADEGADELVFYDITASAHDRVIDKSWVSRVAERIDIPFCVAGGIRTIEQAREKLAFGADKISINSPALTDPSLIERLQEEFGRQCIVIGIDSYYDHISDSYKVKQFTGDEAATKDTQWYTQDWVEEVQKRGCGEIVLNVMNQDGVRQGYDIEQLSMIRSLCDVPLIASGGAGTMAHFKDVFALAKVDAALAASVFHKGIIDIQALKRYLRDNQIAVRV</sequence>
<organism>
    <name type="scientific">Shewanella piezotolerans (strain WP3 / JCM 13877)</name>
    <dbReference type="NCBI Taxonomy" id="225849"/>
    <lineage>
        <taxon>Bacteria</taxon>
        <taxon>Pseudomonadati</taxon>
        <taxon>Pseudomonadota</taxon>
        <taxon>Gammaproteobacteria</taxon>
        <taxon>Alteromonadales</taxon>
        <taxon>Shewanellaceae</taxon>
        <taxon>Shewanella</taxon>
    </lineage>
</organism>
<reference key="1">
    <citation type="journal article" date="2008" name="PLoS ONE">
        <title>Environmental adaptation: genomic analysis of the piezotolerant and psychrotolerant deep-sea iron reducing bacterium Shewanella piezotolerans WP3.</title>
        <authorList>
            <person name="Wang F."/>
            <person name="Wang J."/>
            <person name="Jian H."/>
            <person name="Zhang B."/>
            <person name="Li S."/>
            <person name="Wang F."/>
            <person name="Zeng X."/>
            <person name="Gao L."/>
            <person name="Bartlett D.H."/>
            <person name="Yu J."/>
            <person name="Hu S."/>
            <person name="Xiao X."/>
        </authorList>
    </citation>
    <scope>NUCLEOTIDE SEQUENCE [LARGE SCALE GENOMIC DNA]</scope>
    <source>
        <strain>WP3 / JCM 13877</strain>
    </source>
</reference>
<protein>
    <recommendedName>
        <fullName evidence="1">Imidazole glycerol phosphate synthase subunit HisF</fullName>
        <ecNumber evidence="1">4.3.2.10</ecNumber>
    </recommendedName>
    <alternativeName>
        <fullName evidence="1">IGP synthase cyclase subunit</fullName>
    </alternativeName>
    <alternativeName>
        <fullName evidence="1">IGP synthase subunit HisF</fullName>
    </alternativeName>
    <alternativeName>
        <fullName evidence="1">ImGP synthase subunit HisF</fullName>
        <shortName evidence="1">IGPS subunit HisF</shortName>
    </alternativeName>
</protein>